<reference key="1">
    <citation type="journal article" date="2006" name="Genome Res.">
        <title>Skewed genomic variability in strains of the toxigenic bacterial pathogen, Clostridium perfringens.</title>
        <authorList>
            <person name="Myers G.S.A."/>
            <person name="Rasko D.A."/>
            <person name="Cheung J.K."/>
            <person name="Ravel J."/>
            <person name="Seshadri R."/>
            <person name="DeBoy R.T."/>
            <person name="Ren Q."/>
            <person name="Varga J."/>
            <person name="Awad M.M."/>
            <person name="Brinkac L.M."/>
            <person name="Daugherty S.C."/>
            <person name="Haft D.H."/>
            <person name="Dodson R.J."/>
            <person name="Madupu R."/>
            <person name="Nelson W.C."/>
            <person name="Rosovitz M.J."/>
            <person name="Sullivan S.A."/>
            <person name="Khouri H."/>
            <person name="Dimitrov G.I."/>
            <person name="Watkins K.L."/>
            <person name="Mulligan S."/>
            <person name="Benton J."/>
            <person name="Radune D."/>
            <person name="Fisher D.J."/>
            <person name="Atkins H.S."/>
            <person name="Hiscox T."/>
            <person name="Jost B.H."/>
            <person name="Billington S.J."/>
            <person name="Songer J.G."/>
            <person name="McClane B.A."/>
            <person name="Titball R.W."/>
            <person name="Rood J.I."/>
            <person name="Melville S.B."/>
            <person name="Paulsen I.T."/>
        </authorList>
    </citation>
    <scope>NUCLEOTIDE SEQUENCE [LARGE SCALE GENOMIC DNA]</scope>
    <source>
        <strain>SM101 / Type A</strain>
    </source>
</reference>
<gene>
    <name evidence="1" type="primary">rpsD2</name>
    <name type="ordered locus">CPR_2354</name>
</gene>
<sequence>MAKMMGPRFKMCRRLGLNVVGHPKAMKRADRGTSRADKKLSDYGIQLLEKQRLRAYYGVMERQFTRYVDQAFNSKEQPGEALLMILESRLDNMVYRMGFASSIRQARQMVNHGHFLVNGKKVNIPSFRLNIGDEVVLREKSRKTEMFVNNFKDSIGSEVPYISKEEDNFKGIFARKPKREEIPITIQEQLIVEFYSK</sequence>
<protein>
    <recommendedName>
        <fullName evidence="1">Small ribosomal subunit protein uS4B</fullName>
    </recommendedName>
    <alternativeName>
        <fullName evidence="2">30S ribosomal protein S4 2</fullName>
    </alternativeName>
</protein>
<evidence type="ECO:0000255" key="1">
    <source>
        <dbReference type="HAMAP-Rule" id="MF_01306"/>
    </source>
</evidence>
<evidence type="ECO:0000305" key="2"/>
<proteinExistence type="inferred from homology"/>
<feature type="chain" id="PRO_0000293265" description="Small ribosomal subunit protein uS4B">
    <location>
        <begin position="1"/>
        <end position="197"/>
    </location>
</feature>
<feature type="domain" description="S4 RNA-binding" evidence="1">
    <location>
        <begin position="88"/>
        <end position="150"/>
    </location>
</feature>
<comment type="function">
    <text evidence="1">One of the primary rRNA binding proteins, it binds directly to 16S rRNA where it nucleates assembly of the body of the 30S subunit.</text>
</comment>
<comment type="function">
    <text evidence="1">With S5 and S12 plays an important role in translational accuracy.</text>
</comment>
<comment type="subunit">
    <text evidence="1">Part of the 30S ribosomal subunit. Contacts protein S5. The interaction surface between S4 and S5 is involved in control of translational fidelity.</text>
</comment>
<comment type="similarity">
    <text evidence="1">Belongs to the universal ribosomal protein uS4 family.</text>
</comment>
<keyword id="KW-0687">Ribonucleoprotein</keyword>
<keyword id="KW-0689">Ribosomal protein</keyword>
<keyword id="KW-0694">RNA-binding</keyword>
<keyword id="KW-0699">rRNA-binding</keyword>
<accession>Q0SQI8</accession>
<organism>
    <name type="scientific">Clostridium perfringens (strain SM101 / Type A)</name>
    <dbReference type="NCBI Taxonomy" id="289380"/>
    <lineage>
        <taxon>Bacteria</taxon>
        <taxon>Bacillati</taxon>
        <taxon>Bacillota</taxon>
        <taxon>Clostridia</taxon>
        <taxon>Eubacteriales</taxon>
        <taxon>Clostridiaceae</taxon>
        <taxon>Clostridium</taxon>
    </lineage>
</organism>
<name>RS4B_CLOPS</name>
<dbReference type="EMBL" id="CP000312">
    <property type="protein sequence ID" value="ABG87613.1"/>
    <property type="molecule type" value="Genomic_DNA"/>
</dbReference>
<dbReference type="RefSeq" id="WP_011593120.1">
    <property type="nucleotide sequence ID" value="NC_008262.1"/>
</dbReference>
<dbReference type="SMR" id="Q0SQI8"/>
<dbReference type="KEGG" id="cpr:CPR_2354"/>
<dbReference type="Proteomes" id="UP000001824">
    <property type="component" value="Chromosome"/>
</dbReference>
<dbReference type="GO" id="GO:0015935">
    <property type="term" value="C:small ribosomal subunit"/>
    <property type="evidence" value="ECO:0007669"/>
    <property type="project" value="InterPro"/>
</dbReference>
<dbReference type="GO" id="GO:0019843">
    <property type="term" value="F:rRNA binding"/>
    <property type="evidence" value="ECO:0007669"/>
    <property type="project" value="UniProtKB-UniRule"/>
</dbReference>
<dbReference type="GO" id="GO:0003735">
    <property type="term" value="F:structural constituent of ribosome"/>
    <property type="evidence" value="ECO:0007669"/>
    <property type="project" value="InterPro"/>
</dbReference>
<dbReference type="GO" id="GO:0042274">
    <property type="term" value="P:ribosomal small subunit biogenesis"/>
    <property type="evidence" value="ECO:0007669"/>
    <property type="project" value="TreeGrafter"/>
</dbReference>
<dbReference type="GO" id="GO:0006412">
    <property type="term" value="P:translation"/>
    <property type="evidence" value="ECO:0007669"/>
    <property type="project" value="UniProtKB-UniRule"/>
</dbReference>
<dbReference type="CDD" id="cd00165">
    <property type="entry name" value="S4"/>
    <property type="match status" value="1"/>
</dbReference>
<dbReference type="FunFam" id="3.10.290.10:FF:000001">
    <property type="entry name" value="30S ribosomal protein S4"/>
    <property type="match status" value="1"/>
</dbReference>
<dbReference type="Gene3D" id="1.10.1050.10">
    <property type="entry name" value="Ribosomal Protein S4 Delta 41, Chain A, domain 1"/>
    <property type="match status" value="1"/>
</dbReference>
<dbReference type="Gene3D" id="3.10.290.10">
    <property type="entry name" value="RNA-binding S4 domain"/>
    <property type="match status" value="1"/>
</dbReference>
<dbReference type="HAMAP" id="MF_01306_B">
    <property type="entry name" value="Ribosomal_uS4_B"/>
    <property type="match status" value="1"/>
</dbReference>
<dbReference type="InterPro" id="IPR022801">
    <property type="entry name" value="Ribosomal_uS4"/>
</dbReference>
<dbReference type="InterPro" id="IPR005709">
    <property type="entry name" value="Ribosomal_uS4_bac-type"/>
</dbReference>
<dbReference type="InterPro" id="IPR018079">
    <property type="entry name" value="Ribosomal_uS4_CS"/>
</dbReference>
<dbReference type="InterPro" id="IPR001912">
    <property type="entry name" value="Ribosomal_uS4_N"/>
</dbReference>
<dbReference type="InterPro" id="IPR002942">
    <property type="entry name" value="S4_RNA-bd"/>
</dbReference>
<dbReference type="InterPro" id="IPR036986">
    <property type="entry name" value="S4_RNA-bd_sf"/>
</dbReference>
<dbReference type="NCBIfam" id="NF003717">
    <property type="entry name" value="PRK05327.1"/>
    <property type="match status" value="1"/>
</dbReference>
<dbReference type="NCBIfam" id="TIGR01017">
    <property type="entry name" value="rpsD_bact"/>
    <property type="match status" value="1"/>
</dbReference>
<dbReference type="PANTHER" id="PTHR11831">
    <property type="entry name" value="30S 40S RIBOSOMAL PROTEIN"/>
    <property type="match status" value="1"/>
</dbReference>
<dbReference type="PANTHER" id="PTHR11831:SF4">
    <property type="entry name" value="SMALL RIBOSOMAL SUBUNIT PROTEIN US4M"/>
    <property type="match status" value="1"/>
</dbReference>
<dbReference type="Pfam" id="PF00163">
    <property type="entry name" value="Ribosomal_S4"/>
    <property type="match status" value="1"/>
</dbReference>
<dbReference type="Pfam" id="PF01479">
    <property type="entry name" value="S4"/>
    <property type="match status" value="1"/>
</dbReference>
<dbReference type="SMART" id="SM01390">
    <property type="entry name" value="Ribosomal_S4"/>
    <property type="match status" value="1"/>
</dbReference>
<dbReference type="SMART" id="SM00363">
    <property type="entry name" value="S4"/>
    <property type="match status" value="1"/>
</dbReference>
<dbReference type="SUPFAM" id="SSF55174">
    <property type="entry name" value="Alpha-L RNA-binding motif"/>
    <property type="match status" value="1"/>
</dbReference>
<dbReference type="PROSITE" id="PS00632">
    <property type="entry name" value="RIBOSOMAL_S4"/>
    <property type="match status" value="1"/>
</dbReference>
<dbReference type="PROSITE" id="PS50889">
    <property type="entry name" value="S4"/>
    <property type="match status" value="1"/>
</dbReference>